<reference key="1">
    <citation type="journal article" date="2007" name="Nat. Biotechnol.">
        <title>Genome sequence and identification of candidate vaccine antigens from the animal pathogen Dichelobacter nodosus.</title>
        <authorList>
            <person name="Myers G.S.A."/>
            <person name="Parker D."/>
            <person name="Al-Hasani K."/>
            <person name="Kennan R.M."/>
            <person name="Seemann T."/>
            <person name="Ren Q."/>
            <person name="Badger J.H."/>
            <person name="Selengut J.D."/>
            <person name="Deboy R.T."/>
            <person name="Tettelin H."/>
            <person name="Boyce J.D."/>
            <person name="McCarl V.P."/>
            <person name="Han X."/>
            <person name="Nelson W.C."/>
            <person name="Madupu R."/>
            <person name="Mohamoud Y."/>
            <person name="Holley T."/>
            <person name="Fedorova N."/>
            <person name="Khouri H."/>
            <person name="Bottomley S.P."/>
            <person name="Whittington R.J."/>
            <person name="Adler B."/>
            <person name="Songer J.G."/>
            <person name="Rood J.I."/>
            <person name="Paulsen I.T."/>
        </authorList>
    </citation>
    <scope>NUCLEOTIDE SEQUENCE [LARGE SCALE GENOMIC DNA]</scope>
    <source>
        <strain>VCS1703A</strain>
    </source>
</reference>
<accession>A5EYG3</accession>
<organism>
    <name type="scientific">Dichelobacter nodosus (strain VCS1703A)</name>
    <dbReference type="NCBI Taxonomy" id="246195"/>
    <lineage>
        <taxon>Bacteria</taxon>
        <taxon>Pseudomonadati</taxon>
        <taxon>Pseudomonadota</taxon>
        <taxon>Gammaproteobacteria</taxon>
        <taxon>Cardiobacteriales</taxon>
        <taxon>Cardiobacteriaceae</taxon>
        <taxon>Dichelobacter</taxon>
    </lineage>
</organism>
<keyword id="KW-0067">ATP-binding</keyword>
<keyword id="KW-0143">Chaperone</keyword>
<keyword id="KW-0547">Nucleotide-binding</keyword>
<keyword id="KW-0597">Phosphoprotein</keyword>
<keyword id="KW-1185">Reference proteome</keyword>
<keyword id="KW-0346">Stress response</keyword>
<gene>
    <name evidence="1" type="primary">dnaK</name>
    <name type="ordered locus">DNO_0826</name>
</gene>
<feature type="chain" id="PRO_1000059551" description="Chaperone protein DnaK">
    <location>
        <begin position="1"/>
        <end position="642"/>
    </location>
</feature>
<feature type="region of interest" description="Disordered" evidence="2">
    <location>
        <begin position="602"/>
        <end position="642"/>
    </location>
</feature>
<feature type="modified residue" description="Phosphothreonine; by autocatalysis" evidence="1">
    <location>
        <position position="198"/>
    </location>
</feature>
<evidence type="ECO:0000255" key="1">
    <source>
        <dbReference type="HAMAP-Rule" id="MF_00332"/>
    </source>
</evidence>
<evidence type="ECO:0000256" key="2">
    <source>
        <dbReference type="SAM" id="MobiDB-lite"/>
    </source>
</evidence>
<protein>
    <recommendedName>
        <fullName evidence="1">Chaperone protein DnaK</fullName>
    </recommendedName>
    <alternativeName>
        <fullName evidence="1">HSP70</fullName>
    </alternativeName>
    <alternativeName>
        <fullName evidence="1">Heat shock 70 kDa protein</fullName>
    </alternativeName>
    <alternativeName>
        <fullName evidence="1">Heat shock protein 70</fullName>
    </alternativeName>
</protein>
<dbReference type="EMBL" id="CP000513">
    <property type="protein sequence ID" value="ABQ13697.1"/>
    <property type="molecule type" value="Genomic_DNA"/>
</dbReference>
<dbReference type="RefSeq" id="WP_012031149.1">
    <property type="nucleotide sequence ID" value="NC_009446.1"/>
</dbReference>
<dbReference type="SMR" id="A5EYG3"/>
<dbReference type="STRING" id="246195.DNO_0826"/>
<dbReference type="KEGG" id="dno:DNO_0826"/>
<dbReference type="eggNOG" id="COG0443">
    <property type="taxonomic scope" value="Bacteria"/>
</dbReference>
<dbReference type="HOGENOM" id="CLU_005965_2_1_6"/>
<dbReference type="OrthoDB" id="9766019at2"/>
<dbReference type="Proteomes" id="UP000000248">
    <property type="component" value="Chromosome"/>
</dbReference>
<dbReference type="GO" id="GO:0005524">
    <property type="term" value="F:ATP binding"/>
    <property type="evidence" value="ECO:0007669"/>
    <property type="project" value="UniProtKB-UniRule"/>
</dbReference>
<dbReference type="GO" id="GO:0140662">
    <property type="term" value="F:ATP-dependent protein folding chaperone"/>
    <property type="evidence" value="ECO:0007669"/>
    <property type="project" value="InterPro"/>
</dbReference>
<dbReference type="GO" id="GO:0051082">
    <property type="term" value="F:unfolded protein binding"/>
    <property type="evidence" value="ECO:0007669"/>
    <property type="project" value="InterPro"/>
</dbReference>
<dbReference type="CDD" id="cd10234">
    <property type="entry name" value="ASKHA_NBD_HSP70_DnaK-like"/>
    <property type="match status" value="1"/>
</dbReference>
<dbReference type="FunFam" id="2.60.34.10:FF:000014">
    <property type="entry name" value="Chaperone protein DnaK HSP70"/>
    <property type="match status" value="1"/>
</dbReference>
<dbReference type="FunFam" id="3.30.30.30:FF:000003">
    <property type="entry name" value="Heat shock protein 9"/>
    <property type="match status" value="1"/>
</dbReference>
<dbReference type="FunFam" id="1.20.1270.10:FF:000001">
    <property type="entry name" value="Molecular chaperone DnaK"/>
    <property type="match status" value="1"/>
</dbReference>
<dbReference type="FunFam" id="3.30.420.40:FF:000004">
    <property type="entry name" value="Molecular chaperone DnaK"/>
    <property type="match status" value="1"/>
</dbReference>
<dbReference type="FunFam" id="3.90.640.10:FF:000003">
    <property type="entry name" value="Molecular chaperone DnaK"/>
    <property type="match status" value="1"/>
</dbReference>
<dbReference type="Gene3D" id="1.20.1270.10">
    <property type="match status" value="1"/>
</dbReference>
<dbReference type="Gene3D" id="3.30.420.40">
    <property type="match status" value="2"/>
</dbReference>
<dbReference type="Gene3D" id="3.90.640.10">
    <property type="entry name" value="Actin, Chain A, domain 4"/>
    <property type="match status" value="1"/>
</dbReference>
<dbReference type="Gene3D" id="2.60.34.10">
    <property type="entry name" value="Substrate Binding Domain Of DNAk, Chain A, domain 1"/>
    <property type="match status" value="1"/>
</dbReference>
<dbReference type="HAMAP" id="MF_00332">
    <property type="entry name" value="DnaK"/>
    <property type="match status" value="1"/>
</dbReference>
<dbReference type="InterPro" id="IPR043129">
    <property type="entry name" value="ATPase_NBD"/>
</dbReference>
<dbReference type="InterPro" id="IPR012725">
    <property type="entry name" value="Chaperone_DnaK"/>
</dbReference>
<dbReference type="InterPro" id="IPR018181">
    <property type="entry name" value="Heat_shock_70_CS"/>
</dbReference>
<dbReference type="InterPro" id="IPR029048">
    <property type="entry name" value="HSP70_C_sf"/>
</dbReference>
<dbReference type="InterPro" id="IPR029047">
    <property type="entry name" value="HSP70_peptide-bd_sf"/>
</dbReference>
<dbReference type="InterPro" id="IPR013126">
    <property type="entry name" value="Hsp_70_fam"/>
</dbReference>
<dbReference type="NCBIfam" id="NF001413">
    <property type="entry name" value="PRK00290.1"/>
    <property type="match status" value="1"/>
</dbReference>
<dbReference type="NCBIfam" id="NF003520">
    <property type="entry name" value="PRK05183.1"/>
    <property type="match status" value="1"/>
</dbReference>
<dbReference type="NCBIfam" id="TIGR02350">
    <property type="entry name" value="prok_dnaK"/>
    <property type="match status" value="1"/>
</dbReference>
<dbReference type="PANTHER" id="PTHR19375">
    <property type="entry name" value="HEAT SHOCK PROTEIN 70KDA"/>
    <property type="match status" value="1"/>
</dbReference>
<dbReference type="Pfam" id="PF00012">
    <property type="entry name" value="HSP70"/>
    <property type="match status" value="1"/>
</dbReference>
<dbReference type="PRINTS" id="PR00301">
    <property type="entry name" value="HEATSHOCK70"/>
</dbReference>
<dbReference type="SUPFAM" id="SSF53067">
    <property type="entry name" value="Actin-like ATPase domain"/>
    <property type="match status" value="2"/>
</dbReference>
<dbReference type="SUPFAM" id="SSF100934">
    <property type="entry name" value="Heat shock protein 70kD (HSP70), C-terminal subdomain"/>
    <property type="match status" value="1"/>
</dbReference>
<dbReference type="SUPFAM" id="SSF100920">
    <property type="entry name" value="Heat shock protein 70kD (HSP70), peptide-binding domain"/>
    <property type="match status" value="1"/>
</dbReference>
<dbReference type="PROSITE" id="PS00297">
    <property type="entry name" value="HSP70_1"/>
    <property type="match status" value="1"/>
</dbReference>
<dbReference type="PROSITE" id="PS00329">
    <property type="entry name" value="HSP70_2"/>
    <property type="match status" value="1"/>
</dbReference>
<dbReference type="PROSITE" id="PS01036">
    <property type="entry name" value="HSP70_3"/>
    <property type="match status" value="1"/>
</dbReference>
<sequence>MGKIIGIDLGTTNSCVAVMDGDSAKVIENSEGTRTTPSIIAFSDGEVLVGQPAKRQAVTNPKNTLYAIKRLIGRRFDEKEVQKDINLVPYNIVKSDNGDAWVEIDGKKMAPPEISARILQKMKKTVEDYLGETITEAVITVPAYFNDSQRQATKDAGRIAGLEVKRIINEPTAAALAYGIDRGAKDAKIAVYDLGGGTFDISIIETIDLDEEGQQFEVLATNGDTFLGGEDFDRRIIDYLVNEFKKEQGIDLTSDSLALQRLKEAAEKAKIELSSSQQTDINLPYITADASGPKHMNLKLTRAKLESLVADLIERSLEPCRIAMKDAGLSNSDITDVILVGGQTRMPKVQEAVKNFFGKEPRKDVNPDEAVAMGAAIQGGVLGGQVKDVLLLDVTPLSLGIETLGGVMTKLIEKNTTIPTKASQIFSTAEDNQSAVTIHILQGERQQASANKSLGRFDLSDIPPAPRGMPQIEVSFDIDANGILNVSAKDKQTGKEQSIIIKASSGLSDEEVARMVKDAEAHAEEDRKFQERIETKNSAESMINGVEKAISELGDEVTSDEKEKTEAAIKALREVMKGEDSDAIKEKTNALMEAASSIMQKAYAKMTEKQQSDDGAGTQNADHKEDDVVDADFEEVKSDKKD</sequence>
<comment type="function">
    <text evidence="1">Acts as a chaperone.</text>
</comment>
<comment type="induction">
    <text evidence="1">By stress conditions e.g. heat shock.</text>
</comment>
<comment type="similarity">
    <text evidence="1">Belongs to the heat shock protein 70 family.</text>
</comment>
<name>DNAK_DICNV</name>
<proteinExistence type="inferred from homology"/>